<name>NRDR_BRUO2</name>
<dbReference type="EMBL" id="CP000708">
    <property type="protein sequence ID" value="ABQ61761.1"/>
    <property type="molecule type" value="Genomic_DNA"/>
</dbReference>
<dbReference type="RefSeq" id="WP_002966765.1">
    <property type="nucleotide sequence ID" value="NC_009505.1"/>
</dbReference>
<dbReference type="SMR" id="A5VPU8"/>
<dbReference type="GeneID" id="93016844"/>
<dbReference type="KEGG" id="bov:BOV_0759"/>
<dbReference type="HOGENOM" id="CLU_108412_0_1_5"/>
<dbReference type="PhylomeDB" id="A5VPU8"/>
<dbReference type="Proteomes" id="UP000006383">
    <property type="component" value="Chromosome I"/>
</dbReference>
<dbReference type="GO" id="GO:0005524">
    <property type="term" value="F:ATP binding"/>
    <property type="evidence" value="ECO:0007669"/>
    <property type="project" value="UniProtKB-KW"/>
</dbReference>
<dbReference type="GO" id="GO:0003677">
    <property type="term" value="F:DNA binding"/>
    <property type="evidence" value="ECO:0007669"/>
    <property type="project" value="UniProtKB-KW"/>
</dbReference>
<dbReference type="GO" id="GO:0008270">
    <property type="term" value="F:zinc ion binding"/>
    <property type="evidence" value="ECO:0007669"/>
    <property type="project" value="UniProtKB-UniRule"/>
</dbReference>
<dbReference type="GO" id="GO:0045892">
    <property type="term" value="P:negative regulation of DNA-templated transcription"/>
    <property type="evidence" value="ECO:0007669"/>
    <property type="project" value="UniProtKB-UniRule"/>
</dbReference>
<dbReference type="HAMAP" id="MF_00440">
    <property type="entry name" value="NrdR"/>
    <property type="match status" value="1"/>
</dbReference>
<dbReference type="InterPro" id="IPR005144">
    <property type="entry name" value="ATP-cone_dom"/>
</dbReference>
<dbReference type="InterPro" id="IPR055173">
    <property type="entry name" value="NrdR-like_N"/>
</dbReference>
<dbReference type="InterPro" id="IPR003796">
    <property type="entry name" value="RNR_NrdR-like"/>
</dbReference>
<dbReference type="NCBIfam" id="TIGR00244">
    <property type="entry name" value="transcriptional regulator NrdR"/>
    <property type="match status" value="1"/>
</dbReference>
<dbReference type="PANTHER" id="PTHR30455">
    <property type="entry name" value="TRANSCRIPTIONAL REPRESSOR NRDR"/>
    <property type="match status" value="1"/>
</dbReference>
<dbReference type="PANTHER" id="PTHR30455:SF2">
    <property type="entry name" value="TRANSCRIPTIONAL REPRESSOR NRDR"/>
    <property type="match status" value="1"/>
</dbReference>
<dbReference type="Pfam" id="PF03477">
    <property type="entry name" value="ATP-cone"/>
    <property type="match status" value="1"/>
</dbReference>
<dbReference type="Pfam" id="PF22811">
    <property type="entry name" value="Zn_ribbon_NrdR"/>
    <property type="match status" value="1"/>
</dbReference>
<dbReference type="PROSITE" id="PS51161">
    <property type="entry name" value="ATP_CONE"/>
    <property type="match status" value="1"/>
</dbReference>
<protein>
    <recommendedName>
        <fullName evidence="1">Transcriptional repressor NrdR</fullName>
    </recommendedName>
</protein>
<proteinExistence type="inferred from homology"/>
<accession>A5VPU8</accession>
<keyword id="KW-0067">ATP-binding</keyword>
<keyword id="KW-0238">DNA-binding</keyword>
<keyword id="KW-0479">Metal-binding</keyword>
<keyword id="KW-0547">Nucleotide-binding</keyword>
<keyword id="KW-0678">Repressor</keyword>
<keyword id="KW-0804">Transcription</keyword>
<keyword id="KW-0805">Transcription regulation</keyword>
<keyword id="KW-0862">Zinc</keyword>
<keyword id="KW-0863">Zinc-finger</keyword>
<comment type="function">
    <text evidence="1">Negatively regulates transcription of bacterial ribonucleotide reductase nrd genes and operons by binding to NrdR-boxes.</text>
</comment>
<comment type="cofactor">
    <cofactor evidence="1">
        <name>Zn(2+)</name>
        <dbReference type="ChEBI" id="CHEBI:29105"/>
    </cofactor>
    <text evidence="1">Binds 1 zinc ion.</text>
</comment>
<comment type="similarity">
    <text evidence="1">Belongs to the NrdR family.</text>
</comment>
<feature type="chain" id="PRO_1000080718" description="Transcriptional repressor NrdR">
    <location>
        <begin position="1"/>
        <end position="158"/>
    </location>
</feature>
<feature type="domain" description="ATP-cone" evidence="1">
    <location>
        <begin position="49"/>
        <end position="139"/>
    </location>
</feature>
<feature type="zinc finger region" evidence="1">
    <location>
        <begin position="3"/>
        <end position="34"/>
    </location>
</feature>
<sequence>MRCPYCQSEDTQVKDSRPAEDGAVIRRRRVCSVCGGRFTTFERVQLRDLMVVKKSGRRVPFDRDKLTRSIEVALRKRDVDSERVERAISGIVRQLESAGEAEVTSDEIGRLAMDALKGIDDIAYIRFASVYRNFSKAVDFHNVIDELTVSETGDNLET</sequence>
<reference key="1">
    <citation type="journal article" date="2009" name="PLoS ONE">
        <title>Genome degradation in Brucella ovis corresponds with narrowing of its host range and tissue tropism.</title>
        <authorList>
            <person name="Tsolis R.M."/>
            <person name="Seshadri R."/>
            <person name="Santos R.L."/>
            <person name="Sangari F.J."/>
            <person name="Lobo J.M."/>
            <person name="de Jong M.F."/>
            <person name="Ren Q."/>
            <person name="Myers G."/>
            <person name="Brinkac L.M."/>
            <person name="Nelson W.C."/>
            <person name="Deboy R.T."/>
            <person name="Angiuoli S."/>
            <person name="Khouri H."/>
            <person name="Dimitrov G."/>
            <person name="Robinson J.R."/>
            <person name="Mulligan S."/>
            <person name="Walker R.L."/>
            <person name="Elzer P.E."/>
            <person name="Hassan K.A."/>
            <person name="Paulsen I.T."/>
        </authorList>
    </citation>
    <scope>NUCLEOTIDE SEQUENCE [LARGE SCALE GENOMIC DNA]</scope>
    <source>
        <strain>ATCC 25840 / 63/290 / NCTC 10512</strain>
    </source>
</reference>
<organism>
    <name type="scientific">Brucella ovis (strain ATCC 25840 / 63/290 / NCTC 10512)</name>
    <dbReference type="NCBI Taxonomy" id="444178"/>
    <lineage>
        <taxon>Bacteria</taxon>
        <taxon>Pseudomonadati</taxon>
        <taxon>Pseudomonadota</taxon>
        <taxon>Alphaproteobacteria</taxon>
        <taxon>Hyphomicrobiales</taxon>
        <taxon>Brucellaceae</taxon>
        <taxon>Brucella/Ochrobactrum group</taxon>
        <taxon>Brucella</taxon>
    </lineage>
</organism>
<evidence type="ECO:0000255" key="1">
    <source>
        <dbReference type="HAMAP-Rule" id="MF_00440"/>
    </source>
</evidence>
<gene>
    <name evidence="1" type="primary">nrdR</name>
    <name type="ordered locus">BOV_0759</name>
</gene>